<evidence type="ECO:0000255" key="1">
    <source>
        <dbReference type="HAMAP-Rule" id="MF_01551"/>
    </source>
</evidence>
<gene>
    <name evidence="1" type="primary">rlmM</name>
    <name type="ordered locus">SPA2844</name>
</gene>
<comment type="function">
    <text evidence="1">Catalyzes the 2'-O-methylation at nucleotide C2498 in 23S rRNA.</text>
</comment>
<comment type="catalytic activity">
    <reaction evidence="1">
        <text>cytidine(2498) in 23S rRNA + S-adenosyl-L-methionine = 2'-O-methylcytidine(2498) in 23S rRNA + S-adenosyl-L-homocysteine + H(+)</text>
        <dbReference type="Rhea" id="RHEA:42788"/>
        <dbReference type="Rhea" id="RHEA-COMP:10244"/>
        <dbReference type="Rhea" id="RHEA-COMP:10245"/>
        <dbReference type="ChEBI" id="CHEBI:15378"/>
        <dbReference type="ChEBI" id="CHEBI:57856"/>
        <dbReference type="ChEBI" id="CHEBI:59789"/>
        <dbReference type="ChEBI" id="CHEBI:74495"/>
        <dbReference type="ChEBI" id="CHEBI:82748"/>
        <dbReference type="EC" id="2.1.1.186"/>
    </reaction>
</comment>
<comment type="subunit">
    <text evidence="1">Monomer.</text>
</comment>
<comment type="subcellular location">
    <subcellularLocation>
        <location evidence="1">Cytoplasm</location>
    </subcellularLocation>
</comment>
<comment type="similarity">
    <text evidence="1">Belongs to the class I-like SAM-binding methyltransferase superfamily. RNA methyltransferase RlmE family. RlmM subfamily.</text>
</comment>
<organism>
    <name type="scientific">Salmonella paratyphi A (strain ATCC 9150 / SARB42)</name>
    <dbReference type="NCBI Taxonomy" id="295319"/>
    <lineage>
        <taxon>Bacteria</taxon>
        <taxon>Pseudomonadati</taxon>
        <taxon>Pseudomonadota</taxon>
        <taxon>Gammaproteobacteria</taxon>
        <taxon>Enterobacterales</taxon>
        <taxon>Enterobacteriaceae</taxon>
        <taxon>Salmonella</taxon>
    </lineage>
</organism>
<protein>
    <recommendedName>
        <fullName evidence="1">Ribosomal RNA large subunit methyltransferase M</fullName>
        <ecNumber evidence="1">2.1.1.186</ecNumber>
    </recommendedName>
    <alternativeName>
        <fullName evidence="1">23S rRNA (cytidine2498-2'-O)-methyltransferase</fullName>
    </alternativeName>
    <alternativeName>
        <fullName evidence="1">23S rRNA 2'-O-ribose methyltransferase RlmM</fullName>
    </alternativeName>
</protein>
<proteinExistence type="inferred from homology"/>
<dbReference type="EC" id="2.1.1.186" evidence="1"/>
<dbReference type="EMBL" id="CP000026">
    <property type="protein sequence ID" value="AAV78692.1"/>
    <property type="molecule type" value="Genomic_DNA"/>
</dbReference>
<dbReference type="RefSeq" id="WP_001045499.1">
    <property type="nucleotide sequence ID" value="NC_006511.1"/>
</dbReference>
<dbReference type="SMR" id="Q5PEK5"/>
<dbReference type="DNASU" id="3178702"/>
<dbReference type="KEGG" id="spt:SPA2844"/>
<dbReference type="HOGENOM" id="CLU_043780_0_0_6"/>
<dbReference type="Proteomes" id="UP000008185">
    <property type="component" value="Chromosome"/>
</dbReference>
<dbReference type="GO" id="GO:0005737">
    <property type="term" value="C:cytoplasm"/>
    <property type="evidence" value="ECO:0007669"/>
    <property type="project" value="UniProtKB-SubCell"/>
</dbReference>
<dbReference type="GO" id="GO:0008757">
    <property type="term" value="F:S-adenosylmethionine-dependent methyltransferase activity"/>
    <property type="evidence" value="ECO:0007669"/>
    <property type="project" value="UniProtKB-UniRule"/>
</dbReference>
<dbReference type="GO" id="GO:0032259">
    <property type="term" value="P:methylation"/>
    <property type="evidence" value="ECO:0007669"/>
    <property type="project" value="UniProtKB-KW"/>
</dbReference>
<dbReference type="GO" id="GO:0006364">
    <property type="term" value="P:rRNA processing"/>
    <property type="evidence" value="ECO:0007669"/>
    <property type="project" value="UniProtKB-UniRule"/>
</dbReference>
<dbReference type="FunFam" id="3.30.2300.20:FF:000001">
    <property type="entry name" value="Ribosomal RNA large subunit methyltransferase M"/>
    <property type="match status" value="1"/>
</dbReference>
<dbReference type="FunFam" id="3.30.70.2810:FF:000001">
    <property type="entry name" value="Ribosomal RNA large subunit methyltransferase M"/>
    <property type="match status" value="1"/>
</dbReference>
<dbReference type="FunFam" id="3.40.50.150:FF:000020">
    <property type="entry name" value="Ribosomal RNA large subunit methyltransferase M"/>
    <property type="match status" value="1"/>
</dbReference>
<dbReference type="Gene3D" id="3.30.2300.20">
    <property type="match status" value="1"/>
</dbReference>
<dbReference type="Gene3D" id="3.30.70.2810">
    <property type="match status" value="1"/>
</dbReference>
<dbReference type="Gene3D" id="3.40.50.150">
    <property type="entry name" value="Vaccinia Virus protein VP39"/>
    <property type="match status" value="1"/>
</dbReference>
<dbReference type="HAMAP" id="MF_01551">
    <property type="entry name" value="23SrRNA_methyltr_M"/>
    <property type="match status" value="1"/>
</dbReference>
<dbReference type="InterPro" id="IPR040739">
    <property type="entry name" value="RlmM_FDX"/>
</dbReference>
<dbReference type="InterPro" id="IPR048646">
    <property type="entry name" value="RlmM_THUMP-like"/>
</dbReference>
<dbReference type="InterPro" id="IPR002877">
    <property type="entry name" value="RNA_MeTrfase_FtsJ_dom"/>
</dbReference>
<dbReference type="InterPro" id="IPR011224">
    <property type="entry name" value="rRNA_MeTrfase_M"/>
</dbReference>
<dbReference type="InterPro" id="IPR029063">
    <property type="entry name" value="SAM-dependent_MTases_sf"/>
</dbReference>
<dbReference type="NCBIfam" id="NF008734">
    <property type="entry name" value="PRK11760.1"/>
    <property type="match status" value="1"/>
</dbReference>
<dbReference type="PANTHER" id="PTHR37524">
    <property type="entry name" value="RIBOSOMAL RNA LARGE SUBUNIT METHYLTRANSFERASE M"/>
    <property type="match status" value="1"/>
</dbReference>
<dbReference type="PANTHER" id="PTHR37524:SF2">
    <property type="entry name" value="RIBOSOMAL RNA METHYLTRANSFERASE FTSJ DOMAIN-CONTAINING PROTEIN"/>
    <property type="match status" value="1"/>
</dbReference>
<dbReference type="Pfam" id="PF01728">
    <property type="entry name" value="FtsJ"/>
    <property type="match status" value="1"/>
</dbReference>
<dbReference type="Pfam" id="PF18125">
    <property type="entry name" value="RlmM_FDX"/>
    <property type="match status" value="1"/>
</dbReference>
<dbReference type="Pfam" id="PF21239">
    <property type="entry name" value="RLMM_N"/>
    <property type="match status" value="1"/>
</dbReference>
<dbReference type="PIRSF" id="PIRSF028774">
    <property type="entry name" value="UCP028774"/>
    <property type="match status" value="1"/>
</dbReference>
<dbReference type="SUPFAM" id="SSF53335">
    <property type="entry name" value="S-adenosyl-L-methionine-dependent methyltransferases"/>
    <property type="match status" value="1"/>
</dbReference>
<feature type="chain" id="PRO_0000070423" description="Ribosomal RNA large subunit methyltransferase M">
    <location>
        <begin position="1"/>
        <end position="366"/>
    </location>
</feature>
<feature type="active site" description="Proton acceptor" evidence="1">
    <location>
        <position position="306"/>
    </location>
</feature>
<feature type="binding site" evidence="1">
    <location>
        <position position="188"/>
    </location>
    <ligand>
        <name>S-adenosyl-L-methionine</name>
        <dbReference type="ChEBI" id="CHEBI:59789"/>
    </ligand>
</feature>
<feature type="binding site" evidence="1">
    <location>
        <begin position="221"/>
        <end position="224"/>
    </location>
    <ligand>
        <name>S-adenosyl-L-methionine</name>
        <dbReference type="ChEBI" id="CHEBI:59789"/>
    </ligand>
</feature>
<feature type="binding site" evidence="1">
    <location>
        <position position="240"/>
    </location>
    <ligand>
        <name>S-adenosyl-L-methionine</name>
        <dbReference type="ChEBI" id="CHEBI:59789"/>
    </ligand>
</feature>
<feature type="binding site" evidence="1">
    <location>
        <position position="260"/>
    </location>
    <ligand>
        <name>S-adenosyl-L-methionine</name>
        <dbReference type="ChEBI" id="CHEBI:59789"/>
    </ligand>
</feature>
<feature type="binding site" evidence="1">
    <location>
        <position position="277"/>
    </location>
    <ligand>
        <name>S-adenosyl-L-methionine</name>
        <dbReference type="ChEBI" id="CHEBI:59789"/>
    </ligand>
</feature>
<reference key="1">
    <citation type="journal article" date="2004" name="Nat. Genet.">
        <title>Comparison of genome degradation in Paratyphi A and Typhi, human-restricted serovars of Salmonella enterica that cause typhoid.</title>
        <authorList>
            <person name="McClelland M."/>
            <person name="Sanderson K.E."/>
            <person name="Clifton S.W."/>
            <person name="Latreille P."/>
            <person name="Porwollik S."/>
            <person name="Sabo A."/>
            <person name="Meyer R."/>
            <person name="Bieri T."/>
            <person name="Ozersky P."/>
            <person name="McLellan M."/>
            <person name="Harkins C.R."/>
            <person name="Wang C."/>
            <person name="Nguyen C."/>
            <person name="Berghoff A."/>
            <person name="Elliott G."/>
            <person name="Kohlberg S."/>
            <person name="Strong C."/>
            <person name="Du F."/>
            <person name="Carter J."/>
            <person name="Kremizki C."/>
            <person name="Layman D."/>
            <person name="Leonard S."/>
            <person name="Sun H."/>
            <person name="Fulton L."/>
            <person name="Nash W."/>
            <person name="Miner T."/>
            <person name="Minx P."/>
            <person name="Delehaunty K."/>
            <person name="Fronick C."/>
            <person name="Magrini V."/>
            <person name="Nhan M."/>
            <person name="Warren W."/>
            <person name="Florea L."/>
            <person name="Spieth J."/>
            <person name="Wilson R.K."/>
        </authorList>
    </citation>
    <scope>NUCLEOTIDE SEQUENCE [LARGE SCALE GENOMIC DNA]</scope>
    <source>
        <strain>ATCC 9150 / SARB42</strain>
    </source>
</reference>
<name>RLMM_SALPA</name>
<sequence length="366" mass="42006">MNKVVLLCRPGFEKECAAEITDKAGKREIFGFARVKENAGYVIYECYQPEDGEKLISELPFSSLIFARQWFVVGELLQHLPPEDRITPVVGMLQGVVEKGGELRVEVADTNESKELMKFCRKFTVPLRAALRDAGVLTNYETPKRPVVHVFFIAPGCCYTGYSFAHNNSPFYMGIPRLKFPSDAPSRSTLKLEEALHVFIPEDEWDERLANGMYAVDLGACPGGWTYQLVKRNMWVYSVDNGPMAQSLMDTGQVTWLREDGFRYRPNRNNISWMVCDMVEKPAKVTALMAQWLVNGWCRETIFNLKLPMKKRYEEVSHNLAYLQAQLDEHGVNAQIQARQLYHDREEVTVHVRRLWAAVGGRRDER</sequence>
<accession>Q5PEK5</accession>
<keyword id="KW-0963">Cytoplasm</keyword>
<keyword id="KW-0489">Methyltransferase</keyword>
<keyword id="KW-0698">rRNA processing</keyword>
<keyword id="KW-0949">S-adenosyl-L-methionine</keyword>
<keyword id="KW-0808">Transferase</keyword>